<feature type="chain" id="PRO_1000193077" description="Dihydroorotase">
    <location>
        <begin position="1"/>
        <end position="348"/>
    </location>
</feature>
<feature type="active site" evidence="1">
    <location>
        <position position="251"/>
    </location>
</feature>
<feature type="binding site" evidence="1">
    <location>
        <position position="17"/>
    </location>
    <ligand>
        <name>Zn(2+)</name>
        <dbReference type="ChEBI" id="CHEBI:29105"/>
        <label>1</label>
    </ligand>
</feature>
<feature type="binding site" evidence="1">
    <location>
        <begin position="19"/>
        <end position="21"/>
    </location>
    <ligand>
        <name>substrate</name>
    </ligand>
</feature>
<feature type="binding site" evidence="1">
    <location>
        <position position="19"/>
    </location>
    <ligand>
        <name>Zn(2+)</name>
        <dbReference type="ChEBI" id="CHEBI:29105"/>
        <label>1</label>
    </ligand>
</feature>
<feature type="binding site" evidence="1">
    <location>
        <position position="45"/>
    </location>
    <ligand>
        <name>substrate</name>
    </ligand>
</feature>
<feature type="binding site" description="via carbamate group" evidence="1">
    <location>
        <position position="103"/>
    </location>
    <ligand>
        <name>Zn(2+)</name>
        <dbReference type="ChEBI" id="CHEBI:29105"/>
        <label>1</label>
    </ligand>
</feature>
<feature type="binding site" description="via carbamate group" evidence="1">
    <location>
        <position position="103"/>
    </location>
    <ligand>
        <name>Zn(2+)</name>
        <dbReference type="ChEBI" id="CHEBI:29105"/>
        <label>2</label>
    </ligand>
</feature>
<feature type="binding site" evidence="1">
    <location>
        <position position="140"/>
    </location>
    <ligand>
        <name>substrate</name>
    </ligand>
</feature>
<feature type="binding site" evidence="1">
    <location>
        <position position="140"/>
    </location>
    <ligand>
        <name>Zn(2+)</name>
        <dbReference type="ChEBI" id="CHEBI:29105"/>
        <label>2</label>
    </ligand>
</feature>
<feature type="binding site" evidence="1">
    <location>
        <position position="178"/>
    </location>
    <ligand>
        <name>Zn(2+)</name>
        <dbReference type="ChEBI" id="CHEBI:29105"/>
        <label>2</label>
    </ligand>
</feature>
<feature type="binding site" evidence="1">
    <location>
        <position position="223"/>
    </location>
    <ligand>
        <name>substrate</name>
    </ligand>
</feature>
<feature type="binding site" evidence="1">
    <location>
        <position position="251"/>
    </location>
    <ligand>
        <name>Zn(2+)</name>
        <dbReference type="ChEBI" id="CHEBI:29105"/>
        <label>1</label>
    </ligand>
</feature>
<feature type="binding site" evidence="1">
    <location>
        <position position="255"/>
    </location>
    <ligand>
        <name>substrate</name>
    </ligand>
</feature>
<feature type="binding site" evidence="1">
    <location>
        <position position="267"/>
    </location>
    <ligand>
        <name>substrate</name>
    </ligand>
</feature>
<feature type="modified residue" description="N6-carboxylysine" evidence="1">
    <location>
        <position position="103"/>
    </location>
</feature>
<protein>
    <recommendedName>
        <fullName evidence="1">Dihydroorotase</fullName>
        <shortName evidence="1">DHOase</shortName>
        <ecNumber evidence="1">3.5.2.3</ecNumber>
    </recommendedName>
</protein>
<organism>
    <name type="scientific">Escherichia fergusonii (strain ATCC 35469 / DSM 13698 / CCUG 18766 / IAM 14443 / JCM 21226 / LMG 7866 / NBRC 102419 / NCTC 12128 / CDC 0568-73)</name>
    <dbReference type="NCBI Taxonomy" id="585054"/>
    <lineage>
        <taxon>Bacteria</taxon>
        <taxon>Pseudomonadati</taxon>
        <taxon>Pseudomonadota</taxon>
        <taxon>Gammaproteobacteria</taxon>
        <taxon>Enterobacterales</taxon>
        <taxon>Enterobacteriaceae</taxon>
        <taxon>Escherichia</taxon>
    </lineage>
</organism>
<dbReference type="EC" id="3.5.2.3" evidence="1"/>
<dbReference type="EMBL" id="CU928158">
    <property type="protein sequence ID" value="CAQ89378.1"/>
    <property type="molecule type" value="Genomic_DNA"/>
</dbReference>
<dbReference type="RefSeq" id="WP_000126522.1">
    <property type="nucleotide sequence ID" value="NC_011740.1"/>
</dbReference>
<dbReference type="SMR" id="B7LT74"/>
<dbReference type="MEROPS" id="M38.A02"/>
<dbReference type="GeneID" id="75057099"/>
<dbReference type="KEGG" id="efe:EFER_1867"/>
<dbReference type="HOGENOM" id="CLU_041558_1_0_6"/>
<dbReference type="OrthoDB" id="9808095at2"/>
<dbReference type="UniPathway" id="UPA00070">
    <property type="reaction ID" value="UER00117"/>
</dbReference>
<dbReference type="Proteomes" id="UP000000745">
    <property type="component" value="Chromosome"/>
</dbReference>
<dbReference type="GO" id="GO:0005829">
    <property type="term" value="C:cytosol"/>
    <property type="evidence" value="ECO:0007669"/>
    <property type="project" value="TreeGrafter"/>
</dbReference>
<dbReference type="GO" id="GO:0004151">
    <property type="term" value="F:dihydroorotase activity"/>
    <property type="evidence" value="ECO:0007669"/>
    <property type="project" value="UniProtKB-UniRule"/>
</dbReference>
<dbReference type="GO" id="GO:0008270">
    <property type="term" value="F:zinc ion binding"/>
    <property type="evidence" value="ECO:0007669"/>
    <property type="project" value="UniProtKB-UniRule"/>
</dbReference>
<dbReference type="GO" id="GO:0006207">
    <property type="term" value="P:'de novo' pyrimidine nucleobase biosynthetic process"/>
    <property type="evidence" value="ECO:0007669"/>
    <property type="project" value="TreeGrafter"/>
</dbReference>
<dbReference type="GO" id="GO:0044205">
    <property type="term" value="P:'de novo' UMP biosynthetic process"/>
    <property type="evidence" value="ECO:0007669"/>
    <property type="project" value="UniProtKB-UniRule"/>
</dbReference>
<dbReference type="CDD" id="cd01294">
    <property type="entry name" value="DHOase"/>
    <property type="match status" value="1"/>
</dbReference>
<dbReference type="FunFam" id="3.20.20.140:FF:000006">
    <property type="entry name" value="Dihydroorotase"/>
    <property type="match status" value="1"/>
</dbReference>
<dbReference type="Gene3D" id="3.20.20.140">
    <property type="entry name" value="Metal-dependent hydrolases"/>
    <property type="match status" value="1"/>
</dbReference>
<dbReference type="HAMAP" id="MF_00219">
    <property type="entry name" value="PyrC_classII"/>
    <property type="match status" value="1"/>
</dbReference>
<dbReference type="InterPro" id="IPR006680">
    <property type="entry name" value="Amidohydro-rel"/>
</dbReference>
<dbReference type="InterPro" id="IPR004721">
    <property type="entry name" value="DHOdimr"/>
</dbReference>
<dbReference type="InterPro" id="IPR002195">
    <property type="entry name" value="Dihydroorotase_CS"/>
</dbReference>
<dbReference type="InterPro" id="IPR032466">
    <property type="entry name" value="Metal_Hydrolase"/>
</dbReference>
<dbReference type="NCBIfam" id="TIGR00856">
    <property type="entry name" value="pyrC_dimer"/>
    <property type="match status" value="1"/>
</dbReference>
<dbReference type="PANTHER" id="PTHR43137">
    <property type="entry name" value="DIHYDROOROTASE"/>
    <property type="match status" value="1"/>
</dbReference>
<dbReference type="PANTHER" id="PTHR43137:SF1">
    <property type="entry name" value="DIHYDROOROTASE"/>
    <property type="match status" value="1"/>
</dbReference>
<dbReference type="Pfam" id="PF01979">
    <property type="entry name" value="Amidohydro_1"/>
    <property type="match status" value="1"/>
</dbReference>
<dbReference type="PIRSF" id="PIRSF001237">
    <property type="entry name" value="DHOdimr"/>
    <property type="match status" value="1"/>
</dbReference>
<dbReference type="SUPFAM" id="SSF51556">
    <property type="entry name" value="Metallo-dependent hydrolases"/>
    <property type="match status" value="1"/>
</dbReference>
<dbReference type="PROSITE" id="PS00482">
    <property type="entry name" value="DIHYDROOROTASE_1"/>
    <property type="match status" value="1"/>
</dbReference>
<dbReference type="PROSITE" id="PS00483">
    <property type="entry name" value="DIHYDROOROTASE_2"/>
    <property type="match status" value="1"/>
</dbReference>
<gene>
    <name evidence="1" type="primary">pyrC</name>
    <name type="ordered locus">EFER_1867</name>
</gene>
<proteinExistence type="inferred from homology"/>
<comment type="function">
    <text evidence="1">Catalyzes the reversible cyclization of carbamoyl aspartate to dihydroorotate.</text>
</comment>
<comment type="catalytic activity">
    <reaction evidence="1">
        <text>(S)-dihydroorotate + H2O = N-carbamoyl-L-aspartate + H(+)</text>
        <dbReference type="Rhea" id="RHEA:24296"/>
        <dbReference type="ChEBI" id="CHEBI:15377"/>
        <dbReference type="ChEBI" id="CHEBI:15378"/>
        <dbReference type="ChEBI" id="CHEBI:30864"/>
        <dbReference type="ChEBI" id="CHEBI:32814"/>
        <dbReference type="EC" id="3.5.2.3"/>
    </reaction>
</comment>
<comment type="cofactor">
    <cofactor evidence="1">
        <name>Zn(2+)</name>
        <dbReference type="ChEBI" id="CHEBI:29105"/>
    </cofactor>
    <text evidence="1">Binds 2 Zn(2+) ions per subunit.</text>
</comment>
<comment type="pathway">
    <text evidence="1">Pyrimidine metabolism; UMP biosynthesis via de novo pathway; (S)-dihydroorotate from bicarbonate: step 3/3.</text>
</comment>
<comment type="subunit">
    <text evidence="1">Homodimer.</text>
</comment>
<comment type="similarity">
    <text evidence="1">Belongs to the metallo-dependent hydrolases superfamily. DHOase family. Class II DHOase subfamily.</text>
</comment>
<evidence type="ECO:0000255" key="1">
    <source>
        <dbReference type="HAMAP-Rule" id="MF_00219"/>
    </source>
</evidence>
<name>PYRC_ESCF3</name>
<keyword id="KW-0378">Hydrolase</keyword>
<keyword id="KW-0479">Metal-binding</keyword>
<keyword id="KW-0665">Pyrimidine biosynthesis</keyword>
<keyword id="KW-0862">Zinc</keyword>
<accession>B7LT74</accession>
<reference key="1">
    <citation type="journal article" date="2009" name="PLoS Genet.">
        <title>Organised genome dynamics in the Escherichia coli species results in highly diverse adaptive paths.</title>
        <authorList>
            <person name="Touchon M."/>
            <person name="Hoede C."/>
            <person name="Tenaillon O."/>
            <person name="Barbe V."/>
            <person name="Baeriswyl S."/>
            <person name="Bidet P."/>
            <person name="Bingen E."/>
            <person name="Bonacorsi S."/>
            <person name="Bouchier C."/>
            <person name="Bouvet O."/>
            <person name="Calteau A."/>
            <person name="Chiapello H."/>
            <person name="Clermont O."/>
            <person name="Cruveiller S."/>
            <person name="Danchin A."/>
            <person name="Diard M."/>
            <person name="Dossat C."/>
            <person name="Karoui M.E."/>
            <person name="Frapy E."/>
            <person name="Garry L."/>
            <person name="Ghigo J.M."/>
            <person name="Gilles A.M."/>
            <person name="Johnson J."/>
            <person name="Le Bouguenec C."/>
            <person name="Lescat M."/>
            <person name="Mangenot S."/>
            <person name="Martinez-Jehanne V."/>
            <person name="Matic I."/>
            <person name="Nassif X."/>
            <person name="Oztas S."/>
            <person name="Petit M.A."/>
            <person name="Pichon C."/>
            <person name="Rouy Z."/>
            <person name="Ruf C.S."/>
            <person name="Schneider D."/>
            <person name="Tourret J."/>
            <person name="Vacherie B."/>
            <person name="Vallenet D."/>
            <person name="Medigue C."/>
            <person name="Rocha E.P.C."/>
            <person name="Denamur E."/>
        </authorList>
    </citation>
    <scope>NUCLEOTIDE SEQUENCE [LARGE SCALE GENOMIC DNA]</scope>
    <source>
        <strain>ATCC 35469 / DSM 13698 / BCRC 15582 / CCUG 18766 / IAM 14443 / JCM 21226 / LMG 7866 / NBRC 102419 / NCTC 12128 / CDC 0568-73</strain>
    </source>
</reference>
<sequence>MTAPSQVLKIRRPDDWHLHLRDGDMLKTVVPYSSEIYARAIVMPNLAPPVTTVDAAIAYRQRILAAVPAGHNFTPLMTCYLTDSLDPDELERGFQQGVFTAAKLYPANATTNSSHGVTSTAAIMPVLERMEKIGMPLLVHGEVTHADIDIFDREARFIDTVMEPLRKQLPGLKVVFEHITTKDAADYVREGNDQLAATITPQHLMFNRNHMLVGGIRPHLYCLPILKRNVHQQALRELVASGFERVFLGTDSAPHARHRKEASCGCAGCFNAPTALGSYATVFEEMNALQHLEAFCSLNGPKFYGLPVNDSFIELERRESQVPDNIALNDDSLIPFLAGETIHWSVKK</sequence>